<dbReference type="EC" id="2.7.13.3"/>
<dbReference type="EMBL" id="CP000046">
    <property type="protein sequence ID" value="AAW38195.1"/>
    <property type="molecule type" value="Genomic_DNA"/>
</dbReference>
<dbReference type="RefSeq" id="WP_000166801.1">
    <property type="nucleotide sequence ID" value="NZ_JBGOFO010000003.1"/>
</dbReference>
<dbReference type="SMR" id="Q5HG05"/>
<dbReference type="KEGG" id="sac:SACOL1450"/>
<dbReference type="HOGENOM" id="CLU_000445_89_6_9"/>
<dbReference type="Proteomes" id="UP000000530">
    <property type="component" value="Chromosome"/>
</dbReference>
<dbReference type="GO" id="GO:0005886">
    <property type="term" value="C:plasma membrane"/>
    <property type="evidence" value="ECO:0007669"/>
    <property type="project" value="UniProtKB-SubCell"/>
</dbReference>
<dbReference type="GO" id="GO:0005524">
    <property type="term" value="F:ATP binding"/>
    <property type="evidence" value="ECO:0007669"/>
    <property type="project" value="UniProtKB-KW"/>
</dbReference>
<dbReference type="GO" id="GO:0000155">
    <property type="term" value="F:phosphorelay sensor kinase activity"/>
    <property type="evidence" value="ECO:0007669"/>
    <property type="project" value="InterPro"/>
</dbReference>
<dbReference type="CDD" id="cd00075">
    <property type="entry name" value="HATPase"/>
    <property type="match status" value="1"/>
</dbReference>
<dbReference type="CDD" id="cd00082">
    <property type="entry name" value="HisKA"/>
    <property type="match status" value="1"/>
</dbReference>
<dbReference type="FunFam" id="3.30.565.10:FF:000006">
    <property type="entry name" value="Sensor histidine kinase WalK"/>
    <property type="match status" value="1"/>
</dbReference>
<dbReference type="FunFam" id="1.10.287.130:FF:000001">
    <property type="entry name" value="Two-component sensor histidine kinase"/>
    <property type="match status" value="1"/>
</dbReference>
<dbReference type="Gene3D" id="1.10.287.130">
    <property type="match status" value="1"/>
</dbReference>
<dbReference type="Gene3D" id="6.10.340.10">
    <property type="match status" value="1"/>
</dbReference>
<dbReference type="Gene3D" id="3.30.565.10">
    <property type="entry name" value="Histidine kinase-like ATPase, C-terminal domain"/>
    <property type="match status" value="1"/>
</dbReference>
<dbReference type="InterPro" id="IPR041610">
    <property type="entry name" value="ArlS_N"/>
</dbReference>
<dbReference type="InterPro" id="IPR050398">
    <property type="entry name" value="Bact_Sensor_His_Kinase"/>
</dbReference>
<dbReference type="InterPro" id="IPR003660">
    <property type="entry name" value="HAMP_dom"/>
</dbReference>
<dbReference type="InterPro" id="IPR036890">
    <property type="entry name" value="HATPase_C_sf"/>
</dbReference>
<dbReference type="InterPro" id="IPR005467">
    <property type="entry name" value="His_kinase_dom"/>
</dbReference>
<dbReference type="InterPro" id="IPR003661">
    <property type="entry name" value="HisK_dim/P_dom"/>
</dbReference>
<dbReference type="InterPro" id="IPR036097">
    <property type="entry name" value="HisK_dim/P_sf"/>
</dbReference>
<dbReference type="InterPro" id="IPR004358">
    <property type="entry name" value="Sig_transdc_His_kin-like_C"/>
</dbReference>
<dbReference type="PANTHER" id="PTHR45528:SF12">
    <property type="entry name" value="SENSOR HISTIDINE KINASE ARSS"/>
    <property type="match status" value="1"/>
</dbReference>
<dbReference type="PANTHER" id="PTHR45528">
    <property type="entry name" value="SENSOR HISTIDINE KINASE CPXA"/>
    <property type="match status" value="1"/>
</dbReference>
<dbReference type="Pfam" id="PF18719">
    <property type="entry name" value="ArlS_N"/>
    <property type="match status" value="1"/>
</dbReference>
<dbReference type="Pfam" id="PF02518">
    <property type="entry name" value="HATPase_c"/>
    <property type="match status" value="1"/>
</dbReference>
<dbReference type="Pfam" id="PF00512">
    <property type="entry name" value="HisKA"/>
    <property type="match status" value="1"/>
</dbReference>
<dbReference type="PRINTS" id="PR00344">
    <property type="entry name" value="BCTRLSENSOR"/>
</dbReference>
<dbReference type="SMART" id="SM00387">
    <property type="entry name" value="HATPase_c"/>
    <property type="match status" value="1"/>
</dbReference>
<dbReference type="SMART" id="SM00388">
    <property type="entry name" value="HisKA"/>
    <property type="match status" value="1"/>
</dbReference>
<dbReference type="SUPFAM" id="SSF55874">
    <property type="entry name" value="ATPase domain of HSP90 chaperone/DNA topoisomerase II/histidine kinase"/>
    <property type="match status" value="1"/>
</dbReference>
<dbReference type="SUPFAM" id="SSF158472">
    <property type="entry name" value="HAMP domain-like"/>
    <property type="match status" value="1"/>
</dbReference>
<dbReference type="SUPFAM" id="SSF47384">
    <property type="entry name" value="Homodimeric domain of signal transducing histidine kinase"/>
    <property type="match status" value="1"/>
</dbReference>
<dbReference type="PROSITE" id="PS50885">
    <property type="entry name" value="HAMP"/>
    <property type="match status" value="1"/>
</dbReference>
<dbReference type="PROSITE" id="PS50109">
    <property type="entry name" value="HIS_KIN"/>
    <property type="match status" value="1"/>
</dbReference>
<sequence length="451" mass="52400">MTKRKLRNNWIIVTTMITFVTIFLFCLIIIFFLKDTLHNSELDDAERSSSDINNLFHSKPVKDISALDLNASLGNFQEIIIYDEHNNKLFETSNDNTVRVEPGYEHRYFDRVIKKRYKGIEYLIIKEPITTQDFKGYSLLIHSLENYDNIVKSLYIIALAFGVIATIITATISYVFSTQITKPLVSLSNKMIEIRRDGFQNKLQLNTNYEEIDNLANTFNEMMSQIEESFNQQRQFVEDASHELRTPLQIIQGHLNLIQRWGKKDPAVLEESLNISIEEMNRIIKLVEELLELTKGDVNDISSEAQTVHINDEIRSRIHSLKQLHPDYQFDTDLTSKNLEIKMKPHQFEQLFLIFIDNAIKYDVKNKKIKVKTRLKNKQKIIEITDHGIGIPEEDQDFIFDRFYRVDKSRSRSQGGNGLGLSIAQKIIQLNGGSIKIKSEINKGTTFKIIF</sequence>
<protein>
    <recommendedName>
        <fullName>Signal transduction histidine-protein kinase ArlS</fullName>
        <ecNumber>2.7.13.3</ecNumber>
    </recommendedName>
</protein>
<evidence type="ECO:0000250" key="1"/>
<evidence type="ECO:0000255" key="2"/>
<evidence type="ECO:0000255" key="3">
    <source>
        <dbReference type="PROSITE-ProRule" id="PRU00102"/>
    </source>
</evidence>
<evidence type="ECO:0000255" key="4">
    <source>
        <dbReference type="PROSITE-ProRule" id="PRU00107"/>
    </source>
</evidence>
<accession>Q5HG05</accession>
<comment type="function">
    <text evidence="1">Member of the two-component regulatory system ArlS/ArlR involved in the regulation of adhesion, autolysis, multidrug resistance and virulence. ArlS probably functions as a sensor protein kinase which is autophosphorylated at a histidine residue and transfers its phosphate group to ArlR (By similarity).</text>
</comment>
<comment type="catalytic activity">
    <reaction>
        <text>ATP + protein L-histidine = ADP + protein N-phospho-L-histidine.</text>
        <dbReference type="EC" id="2.7.13.3"/>
    </reaction>
</comment>
<comment type="subcellular location">
    <subcellularLocation>
        <location evidence="1">Cell membrane</location>
        <topology evidence="1">Multi-pass membrane protein</topology>
    </subcellularLocation>
</comment>
<comment type="PTM">
    <text evidence="1">Autophosphorylated.</text>
</comment>
<organism>
    <name type="scientific">Staphylococcus aureus (strain COL)</name>
    <dbReference type="NCBI Taxonomy" id="93062"/>
    <lineage>
        <taxon>Bacteria</taxon>
        <taxon>Bacillati</taxon>
        <taxon>Bacillota</taxon>
        <taxon>Bacilli</taxon>
        <taxon>Bacillales</taxon>
        <taxon>Staphylococcaceae</taxon>
        <taxon>Staphylococcus</taxon>
    </lineage>
</organism>
<gene>
    <name type="primary">arlS</name>
    <name type="ordered locus">SACOL1450</name>
</gene>
<keyword id="KW-0067">ATP-binding</keyword>
<keyword id="KW-1003">Cell membrane</keyword>
<keyword id="KW-0418">Kinase</keyword>
<keyword id="KW-0472">Membrane</keyword>
<keyword id="KW-0547">Nucleotide-binding</keyword>
<keyword id="KW-0597">Phosphoprotein</keyword>
<keyword id="KW-0808">Transferase</keyword>
<keyword id="KW-0812">Transmembrane</keyword>
<keyword id="KW-1133">Transmembrane helix</keyword>
<keyword id="KW-0902">Two-component regulatory system</keyword>
<keyword id="KW-0843">Virulence</keyword>
<name>ARLS_STAAC</name>
<reference key="1">
    <citation type="journal article" date="2005" name="J. Bacteriol.">
        <title>Insights on evolution of virulence and resistance from the complete genome analysis of an early methicillin-resistant Staphylococcus aureus strain and a biofilm-producing methicillin-resistant Staphylococcus epidermidis strain.</title>
        <authorList>
            <person name="Gill S.R."/>
            <person name="Fouts D.E."/>
            <person name="Archer G.L."/>
            <person name="Mongodin E.F."/>
            <person name="DeBoy R.T."/>
            <person name="Ravel J."/>
            <person name="Paulsen I.T."/>
            <person name="Kolonay J.F."/>
            <person name="Brinkac L.M."/>
            <person name="Beanan M.J."/>
            <person name="Dodson R.J."/>
            <person name="Daugherty S.C."/>
            <person name="Madupu R."/>
            <person name="Angiuoli S.V."/>
            <person name="Durkin A.S."/>
            <person name="Haft D.H."/>
            <person name="Vamathevan J.J."/>
            <person name="Khouri H."/>
            <person name="Utterback T.R."/>
            <person name="Lee C."/>
            <person name="Dimitrov G."/>
            <person name="Jiang L."/>
            <person name="Qin H."/>
            <person name="Weidman J."/>
            <person name="Tran K."/>
            <person name="Kang K.H."/>
            <person name="Hance I.R."/>
            <person name="Nelson K.E."/>
            <person name="Fraser C.M."/>
        </authorList>
    </citation>
    <scope>NUCLEOTIDE SEQUENCE [LARGE SCALE GENOMIC DNA]</scope>
    <source>
        <strain>COL</strain>
    </source>
</reference>
<feature type="chain" id="PRO_0000074689" description="Signal transduction histidine-protein kinase ArlS">
    <location>
        <begin position="1"/>
        <end position="451"/>
    </location>
</feature>
<feature type="transmembrane region" description="Helical" evidence="2">
    <location>
        <begin position="11"/>
        <end position="31"/>
    </location>
</feature>
<feature type="transmembrane region" description="Helical" evidence="2">
    <location>
        <begin position="156"/>
        <end position="176"/>
    </location>
</feature>
<feature type="domain" description="HAMP" evidence="3">
    <location>
        <begin position="178"/>
        <end position="231"/>
    </location>
</feature>
<feature type="domain" description="Histidine kinase" evidence="4">
    <location>
        <begin position="239"/>
        <end position="451"/>
    </location>
</feature>
<feature type="modified residue" description="Phosphohistidine; by autocatalysis" evidence="4">
    <location>
        <position position="242"/>
    </location>
</feature>
<proteinExistence type="inferred from homology"/>